<comment type="function">
    <text>May be a cell surface adhesion protein.</text>
</comment>
<comment type="subcellular location">
    <subcellularLocation>
        <location>Cell membrane</location>
        <topology>Lipid-anchor</topology>
        <topology>GPI-anchor</topology>
    </subcellularLocation>
</comment>
<comment type="similarity">
    <text evidence="4">Belongs to the fasciclin-like AGP family.</text>
</comment>
<evidence type="ECO:0000255" key="1"/>
<evidence type="ECO:0000255" key="2">
    <source>
        <dbReference type="PROSITE-ProRule" id="PRU00082"/>
    </source>
</evidence>
<evidence type="ECO:0000256" key="3">
    <source>
        <dbReference type="SAM" id="MobiDB-lite"/>
    </source>
</evidence>
<evidence type="ECO:0000305" key="4"/>
<proteinExistence type="evidence at protein level"/>
<keyword id="KW-1003">Cell membrane</keyword>
<keyword id="KW-0325">Glycoprotein</keyword>
<keyword id="KW-0336">GPI-anchor</keyword>
<keyword id="KW-0449">Lipoprotein</keyword>
<keyword id="KW-0472">Membrane</keyword>
<keyword id="KW-0654">Proteoglycan</keyword>
<keyword id="KW-1185">Reference proteome</keyword>
<keyword id="KW-0732">Signal</keyword>
<organism>
    <name type="scientific">Arabidopsis thaliana</name>
    <name type="common">Mouse-ear cress</name>
    <dbReference type="NCBI Taxonomy" id="3702"/>
    <lineage>
        <taxon>Eukaryota</taxon>
        <taxon>Viridiplantae</taxon>
        <taxon>Streptophyta</taxon>
        <taxon>Embryophyta</taxon>
        <taxon>Tracheophyta</taxon>
        <taxon>Spermatophyta</taxon>
        <taxon>Magnoliopsida</taxon>
        <taxon>eudicotyledons</taxon>
        <taxon>Gunneridae</taxon>
        <taxon>Pentapetalae</taxon>
        <taxon>rosids</taxon>
        <taxon>malvids</taxon>
        <taxon>Brassicales</taxon>
        <taxon>Brassicaceae</taxon>
        <taxon>Camelineae</taxon>
        <taxon>Arabidopsis</taxon>
    </lineage>
</organism>
<sequence length="247" mass="26205">MATTPLLLLLLTAVFLSTEITAQRAAPAPGPAGPINITAILEKGGQFVTLIRLLNTTQIGNQINIQINSSSEGMTVLAPTDNAFQNLKPGTLNKLSPDDQVKLILYHVSPKFYTLEDLLSVSNPVRTQASGRDVGGVYGLNFTGQGNQVNVSTGVVETRLSTSLRQERPLAVYVVDMVLLPEEMFGERKISPMAPPPKSKSPDVSDDSESSKKAAAPSESEKSGSGEMNTGLGLGLGLVVLCLKFLL</sequence>
<protein>
    <recommendedName>
        <fullName>Fasciclin-like arabinogalactan protein 13</fullName>
    </recommendedName>
</protein>
<gene>
    <name type="primary">FLA13</name>
    <name type="ordered locus">At5g44130</name>
    <name type="ORF">MLN1_5</name>
</gene>
<accession>Q9FFH6</accession>
<dbReference type="EMBL" id="AB005239">
    <property type="protein sequence ID" value="BAB10980.1"/>
    <property type="molecule type" value="Genomic_DNA"/>
</dbReference>
<dbReference type="EMBL" id="CP002688">
    <property type="protein sequence ID" value="AED95065.1"/>
    <property type="molecule type" value="Genomic_DNA"/>
</dbReference>
<dbReference type="EMBL" id="AF083710">
    <property type="protein sequence ID" value="AAN60268.1"/>
    <property type="molecule type" value="mRNA"/>
</dbReference>
<dbReference type="EMBL" id="AY058201">
    <property type="protein sequence ID" value="AAL25613.1"/>
    <property type="molecule type" value="mRNA"/>
</dbReference>
<dbReference type="EMBL" id="AY098971">
    <property type="protein sequence ID" value="AAM19981.1"/>
    <property type="molecule type" value="mRNA"/>
</dbReference>
<dbReference type="RefSeq" id="NP_199226.1">
    <property type="nucleotide sequence ID" value="NM_123780.3"/>
</dbReference>
<dbReference type="SMR" id="Q9FFH6"/>
<dbReference type="FunCoup" id="Q9FFH6">
    <property type="interactions" value="90"/>
</dbReference>
<dbReference type="STRING" id="3702.Q9FFH6"/>
<dbReference type="GlyCosmos" id="Q9FFH6">
    <property type="glycosylation" value="5 sites, No reported glycans"/>
</dbReference>
<dbReference type="GlyGen" id="Q9FFH6">
    <property type="glycosylation" value="5 sites"/>
</dbReference>
<dbReference type="PaxDb" id="3702-AT5G44130.1"/>
<dbReference type="ProteomicsDB" id="228934"/>
<dbReference type="EnsemblPlants" id="AT5G44130.1">
    <property type="protein sequence ID" value="AT5G44130.1"/>
    <property type="gene ID" value="AT5G44130"/>
</dbReference>
<dbReference type="GeneID" id="834436"/>
<dbReference type="Gramene" id="AT5G44130.1">
    <property type="protein sequence ID" value="AT5G44130.1"/>
    <property type="gene ID" value="AT5G44130"/>
</dbReference>
<dbReference type="KEGG" id="ath:AT5G44130"/>
<dbReference type="Araport" id="AT5G44130"/>
<dbReference type="TAIR" id="AT5G44130">
    <property type="gene designation" value="FLA13"/>
</dbReference>
<dbReference type="eggNOG" id="ENOG502R770">
    <property type="taxonomic scope" value="Eukaryota"/>
</dbReference>
<dbReference type="HOGENOM" id="CLU_067693_1_0_1"/>
<dbReference type="InParanoid" id="Q9FFH6"/>
<dbReference type="OMA" id="GSGEMNT"/>
<dbReference type="PhylomeDB" id="Q9FFH6"/>
<dbReference type="PRO" id="PR:Q9FFH6"/>
<dbReference type="Proteomes" id="UP000006548">
    <property type="component" value="Chromosome 5"/>
</dbReference>
<dbReference type="ExpressionAtlas" id="Q9FFH6">
    <property type="expression patterns" value="baseline and differential"/>
</dbReference>
<dbReference type="GO" id="GO:0005794">
    <property type="term" value="C:Golgi apparatus"/>
    <property type="evidence" value="ECO:0007005"/>
    <property type="project" value="TAIR"/>
</dbReference>
<dbReference type="GO" id="GO:0009505">
    <property type="term" value="C:plant-type cell wall"/>
    <property type="evidence" value="ECO:0007005"/>
    <property type="project" value="TAIR"/>
</dbReference>
<dbReference type="GO" id="GO:0005886">
    <property type="term" value="C:plasma membrane"/>
    <property type="evidence" value="ECO:0007005"/>
    <property type="project" value="TAIR"/>
</dbReference>
<dbReference type="GO" id="GO:0009506">
    <property type="term" value="C:plasmodesma"/>
    <property type="evidence" value="ECO:0007005"/>
    <property type="project" value="TAIR"/>
</dbReference>
<dbReference type="GO" id="GO:0009536">
    <property type="term" value="C:plastid"/>
    <property type="evidence" value="ECO:0007005"/>
    <property type="project" value="TAIR"/>
</dbReference>
<dbReference type="GO" id="GO:0098552">
    <property type="term" value="C:side of membrane"/>
    <property type="evidence" value="ECO:0007669"/>
    <property type="project" value="UniProtKB-KW"/>
</dbReference>
<dbReference type="FunFam" id="2.30.180.10:FF:000006">
    <property type="entry name" value="Fasciclin-like arabinogalactan protein 11"/>
    <property type="match status" value="1"/>
</dbReference>
<dbReference type="Gene3D" id="2.30.180.10">
    <property type="entry name" value="FAS1 domain"/>
    <property type="match status" value="1"/>
</dbReference>
<dbReference type="InterPro" id="IPR036378">
    <property type="entry name" value="FAS1_dom_sf"/>
</dbReference>
<dbReference type="InterPro" id="IPR000782">
    <property type="entry name" value="FAS1_domain"/>
</dbReference>
<dbReference type="InterPro" id="IPR045003">
    <property type="entry name" value="FLA_A"/>
</dbReference>
<dbReference type="PANTHER" id="PTHR32077">
    <property type="entry name" value="FASCICLIN-LIKE ARABINOGALACTAN PROTEIN"/>
    <property type="match status" value="1"/>
</dbReference>
<dbReference type="PANTHER" id="PTHR32077:SF54">
    <property type="entry name" value="FASCICLIN-LIKE ARABINOGALACTAN PROTEIN 13-RELATED"/>
    <property type="match status" value="1"/>
</dbReference>
<dbReference type="Pfam" id="PF02469">
    <property type="entry name" value="Fasciclin"/>
    <property type="match status" value="1"/>
</dbReference>
<dbReference type="SMART" id="SM00554">
    <property type="entry name" value="FAS1"/>
    <property type="match status" value="1"/>
</dbReference>
<dbReference type="SUPFAM" id="SSF82153">
    <property type="entry name" value="FAS1 domain"/>
    <property type="match status" value="1"/>
</dbReference>
<dbReference type="PROSITE" id="PS50213">
    <property type="entry name" value="FAS1"/>
    <property type="match status" value="1"/>
</dbReference>
<feature type="signal peptide" evidence="1">
    <location>
        <begin position="1"/>
        <end position="25"/>
    </location>
</feature>
<feature type="chain" id="PRO_0000251261" description="Fasciclin-like arabinogalactan protein 13">
    <location>
        <begin position="26"/>
        <end position="224"/>
    </location>
</feature>
<feature type="propeptide" id="PRO_0000251262" description="Removed in mature form" evidence="1">
    <location>
        <begin position="225"/>
        <end position="247"/>
    </location>
</feature>
<feature type="domain" description="FAS1" evidence="2">
    <location>
        <begin position="34"/>
        <end position="179"/>
    </location>
</feature>
<feature type="region of interest" description="Disordered" evidence="3">
    <location>
        <begin position="189"/>
        <end position="228"/>
    </location>
</feature>
<feature type="lipid moiety-binding region" description="GPI-anchor amidated glycine" evidence="1">
    <location>
        <position position="224"/>
    </location>
</feature>
<feature type="glycosylation site" description="N-linked (GlcNAc...) asparagine" evidence="1">
    <location>
        <position position="36"/>
    </location>
</feature>
<feature type="glycosylation site" description="N-linked (GlcNAc...) asparagine" evidence="1">
    <location>
        <position position="55"/>
    </location>
</feature>
<feature type="glycosylation site" description="N-linked (GlcNAc...) asparagine" evidence="1">
    <location>
        <position position="68"/>
    </location>
</feature>
<feature type="glycosylation site" description="N-linked (GlcNAc...) asparagine" evidence="1">
    <location>
        <position position="141"/>
    </location>
</feature>
<feature type="glycosylation site" description="N-linked (GlcNAc...) asparagine" evidence="1">
    <location>
        <position position="150"/>
    </location>
</feature>
<reference key="1">
    <citation type="journal article" date="1997" name="DNA Res.">
        <title>Structural analysis of Arabidopsis thaliana chromosome 5. I. Sequence features of the 1.6 Mb regions covered by twenty physically assigned P1 clones.</title>
        <authorList>
            <person name="Sato S."/>
            <person name="Kotani H."/>
            <person name="Nakamura Y."/>
            <person name="Kaneko T."/>
            <person name="Asamizu E."/>
            <person name="Fukami M."/>
            <person name="Miyajima N."/>
            <person name="Tabata S."/>
        </authorList>
    </citation>
    <scope>NUCLEOTIDE SEQUENCE [LARGE SCALE GENOMIC DNA]</scope>
    <source>
        <strain>cv. Columbia</strain>
    </source>
</reference>
<reference key="2">
    <citation type="journal article" date="2017" name="Plant J.">
        <title>Araport11: a complete reannotation of the Arabidopsis thaliana reference genome.</title>
        <authorList>
            <person name="Cheng C.Y."/>
            <person name="Krishnakumar V."/>
            <person name="Chan A.P."/>
            <person name="Thibaud-Nissen F."/>
            <person name="Schobel S."/>
            <person name="Town C.D."/>
        </authorList>
    </citation>
    <scope>GENOME REANNOTATION</scope>
    <source>
        <strain>cv. Columbia</strain>
    </source>
</reference>
<reference key="3">
    <citation type="submission" date="1998-08" db="EMBL/GenBank/DDBJ databases">
        <title>Signal peptide selection derived cDNAs from Arabidopsis thaliana leaves and guard cells.</title>
        <authorList>
            <person name="Stracke R."/>
            <person name="Palme K."/>
        </authorList>
    </citation>
    <scope>NUCLEOTIDE SEQUENCE [LARGE SCALE MRNA]</scope>
</reference>
<reference key="4">
    <citation type="journal article" date="2003" name="Science">
        <title>Empirical analysis of transcriptional activity in the Arabidopsis genome.</title>
        <authorList>
            <person name="Yamada K."/>
            <person name="Lim J."/>
            <person name="Dale J.M."/>
            <person name="Chen H."/>
            <person name="Shinn P."/>
            <person name="Palm C.J."/>
            <person name="Southwick A.M."/>
            <person name="Wu H.C."/>
            <person name="Kim C.J."/>
            <person name="Nguyen M."/>
            <person name="Pham P.K."/>
            <person name="Cheuk R.F."/>
            <person name="Karlin-Newmann G."/>
            <person name="Liu S.X."/>
            <person name="Lam B."/>
            <person name="Sakano H."/>
            <person name="Wu T."/>
            <person name="Yu G."/>
            <person name="Miranda M."/>
            <person name="Quach H.L."/>
            <person name="Tripp M."/>
            <person name="Chang C.H."/>
            <person name="Lee J.M."/>
            <person name="Toriumi M.J."/>
            <person name="Chan M.M."/>
            <person name="Tang C.C."/>
            <person name="Onodera C.S."/>
            <person name="Deng J.M."/>
            <person name="Akiyama K."/>
            <person name="Ansari Y."/>
            <person name="Arakawa T."/>
            <person name="Banh J."/>
            <person name="Banno F."/>
            <person name="Bowser L."/>
            <person name="Brooks S.Y."/>
            <person name="Carninci P."/>
            <person name="Chao Q."/>
            <person name="Choy N."/>
            <person name="Enju A."/>
            <person name="Goldsmith A.D."/>
            <person name="Gurjal M."/>
            <person name="Hansen N.F."/>
            <person name="Hayashizaki Y."/>
            <person name="Johnson-Hopson C."/>
            <person name="Hsuan V.W."/>
            <person name="Iida K."/>
            <person name="Karnes M."/>
            <person name="Khan S."/>
            <person name="Koesema E."/>
            <person name="Ishida J."/>
            <person name="Jiang P.X."/>
            <person name="Jones T."/>
            <person name="Kawai J."/>
            <person name="Kamiya A."/>
            <person name="Meyers C."/>
            <person name="Nakajima M."/>
            <person name="Narusaka M."/>
            <person name="Seki M."/>
            <person name="Sakurai T."/>
            <person name="Satou M."/>
            <person name="Tamse R."/>
            <person name="Vaysberg M."/>
            <person name="Wallender E.K."/>
            <person name="Wong C."/>
            <person name="Yamamura Y."/>
            <person name="Yuan S."/>
            <person name="Shinozaki K."/>
            <person name="Davis R.W."/>
            <person name="Theologis A."/>
            <person name="Ecker J.R."/>
        </authorList>
    </citation>
    <scope>NUCLEOTIDE SEQUENCE [LARGE SCALE MRNA]</scope>
    <source>
        <strain>cv. Columbia</strain>
    </source>
</reference>
<reference key="5">
    <citation type="journal article" date="2003" name="Mol. Cell. Proteomics">
        <title>Large-scale analysis of in vivo phosphorylated membrane proteins by immobilized metal ion affinity chromatography and mass spectrometry.</title>
        <authorList>
            <person name="Nuehse T.S."/>
            <person name="Stensballe A."/>
            <person name="Jensen O.N."/>
            <person name="Peck S.C."/>
        </authorList>
    </citation>
    <scope>IDENTIFICATION BY MASS SPECTROMETRY [LARGE SCALE ANALYSIS]</scope>
    <source>
        <strain>cv. La-0</strain>
    </source>
</reference>
<reference key="6">
    <citation type="journal article" date="2003" name="Plant Physiol.">
        <title>The fasciclin-like arabinogalactan proteins of Arabidopsis. A multigene family of putative cell adhesion molecules.</title>
        <authorList>
            <person name="Johnson K.L."/>
            <person name="Jones B.J."/>
            <person name="Bacic A."/>
            <person name="Schultz C.J."/>
        </authorList>
    </citation>
    <scope>GENE FAMILY ORGANIZATION</scope>
    <scope>NOMENCLATURE</scope>
</reference>
<name>FLA13_ARATH</name>